<sequence>MAGPRGLLPLCLLAFCLAGFSFVRGQVLFKGCDVKTTFVTHVPCTSCAAIKKQTCPSGWLRELPDQITQDCRYEVQLGGSMVSMSGCRRKCRKQVVQKACCPGYWGSRCHECPGGAETPCNGHGTCLDGMDRNGTCVCQENFRGSACQECQDPNRFGPDCQSVCSCVHGVCNHGPRGDGSCLCFAGYTGPHCDQELPVCQELRCPQNTQCSAEAPSCRCLPGYTQQGSECRAPNPCWPSPCSLLAQCSVSPKGQAQCHCPENYHGDGMVCLPKDPCTDNLGGCPSNSTLCVYQKPGQAFCTCRPGLVSINSNASAGCFAFCSPFSCDRSATCQVTADGKTSCVCRESEVGDGRACYGHLLHEVQKATQTGRVFLQLRVAVAMMDQGCREILTTAGPFTVLVPSVSSFSSRTMNASLAQQLCRQHIIAGQHILEDTRTQQTRRWWTLAGQEITVTFNQFTKYSYKYKDQPQQTFNIYKANNIAANGVFHVVTGLRWQAPSGTPGDPKRTIGQILASTEAFSRFETILENCGLPSILDGPGPFTVFAPSNEAVDSLRDGRLIYLFTAGLSKLQELVRYHIYNHGQLTVEKLISKGRILTMANQVLAVNISEEGRILLGPEGVPLQRVDVMAANGVIHMLDGILLPPTILPILPKHCSEEQHKIVAGSCVDCQALNTSTCPPNSVKLDIFPKECVYIHDPTGLNVLKKGCASYCNQTIMEQGCCKGFFGPDCTQCPGGFSNPCYGKGNCSDGIQGNGACLCFPDYKGIACHICSNPNKHGEQCQEDCGCVHGLCDNRPGSGGVCQQGTCAPGFSGRFCNESMGDCGPTGLAQHCHLHARCVSQEGVARCRCLDGFEGDGFSCTPSNPCSHPDRGGCSENAECVPGSLGTHHCTCHKGWSGDGRVCVAIDECELDMRGGCHTDALCSYVGPGQSRCTCKLGFAGDGYQCSPIDPCRAGNGGCHGLATCRAVGGGQRVCTCPPGFGGDGFSCYGDIFRELEANAHFSIFYQWLKSAGITLPADRRVTALVPSEAAVRQLSPEDRAFWLQPRTLPNLVRAHFLQGALFEEELARLGGQEVATLNPTTRWEIRNISGRVWVQNASVDVADLLATNGVLHILSQVLLPPRGDVPGGQGLLQQLDLVPAFSLFRELLQHHGLVPQIEAATAYTIFVPTNRSLEAQGNSSHLDADTVRHHVVLGEALSMETLRKGGHRNSLLGPAHWIVFYNHSGQPEVNHVPLEGPMLEAPGRSLIGLSGVLTVGSSRCLHSHAEALREKCVNCTRRFRCTQGFQLQDTPRKSCVYRSGFSFSRGCSYTCAKKIQVPDCCPGFFGTLCEPCPGGLGGVCSGHGQCQDRFLGSGECHCHEGFHGTACEVCELGRYGPNCTGVCDCAHGLCQEGLQGDGSCVCNVGWQGLRCDQKITSPQCPRKCDPNANCVQDSAGASTCACAAGYSGNGIFCSEVDPCAHGHGGCSPHANCTKVAPGQRTCTCQDGYMGDGELCQEINSCLIHHGGCHIHAECIPTGPQQVSCSCREGYSGDGIRTCELLDPCSKNNGGCSPYATCKSTGDGQRTCTCDTAHTVGDGLTCRARVGLELLRDKHASFFSLRLLEYKELKGDGPFTIFVPHADLMSNLSQDELARIRAHRQLVFRYHVVGCRRLRSEDLLEQGYATALSGHPLRFSEREGSIYLNDFARVVSSDHEAVNGILHFIDRVLLPPEALHWEPDDAPIPRRNVTAAAQGFGYKIFSGLLKVAGLLPLLREASHRPFTMLWPTDAAFRALPPDRQAWLYHEDHRDKLAAILRGHMIRNVEALASDLPNLGPLRTMHGTPISFSCSRTRAGELMVGEDDARIVQRHLPFEGGLAYGIDQLLEPPGLGARCDHFETRPLRLNTCSICGLEPPCPEGSQEQGSPEACWRFYPKFWTSPPLHSLGLRSVWVHPSLWGRPQGLGRGCHRNCVTTTWKPSCCPGHYGSECQACPGGPSSPCSDRGVCMDGMSGSGQCLCRSGFAGTACELCAPGAFGPHCQACRCTVHGRCDEGLGGSGSCFCDEGWTGPRCEVQLELQPVCTPPCAPEAVCRAGNSCECSLGYEGDGRVCTVADLCQDGHGGCSEHANCSQVGTMVTCTCLPDYEGDGWSCRARNPCTDGHRGGCSEHANCLSTGLNTRRCECHAGYVGDGLQCLEESEPPVDRCLGQPPPCHSDAMCTDLHFQEKRAGVFHLQATSGPYGLNFSEAEAACEAQGAVLASFPQLSAAQQLGFHLCLMGWLANGSTAHPVVFPVADCGNGRVGIVSLGARKNLSERWDAYCFRVQDVACRCRNGFVGDGISTCNGKLLDVLAATANFSTFYGMLLGYANATQRGLDFLDFLDDELTYKTLFVPVNEGFVDNMTLSGPDLELHASNATLLSANASQGKLLPAHSGLSLIISDAGPDNSSWAPVAPGTVVVSRIIVWDIMAFNGIIHALASPLLAPPQPQAVLAPEAPPVAAGVGAVLAAGALLGLVAGALYLRARGKPMGFGFSAFQAEDDADDDFSPWQEGTNPTLVSVPNPVFGSDTFCEPFDDSLLEEDFPDTQRILTVK</sequence>
<protein>
    <recommendedName>
        <fullName>Stabilin-1</fullName>
    </recommendedName>
    <alternativeName>
        <fullName>Fasciclin, EGF-like, laminin-type EGF-like and link domain-containing scavenger receptor 1</fullName>
        <shortName>FEEL-1</shortName>
    </alternativeName>
    <alternativeName>
        <fullName>MS-1 antigen</fullName>
    </alternativeName>
</protein>
<comment type="function">
    <text evidence="7 9">Acts as a scavenger receptor for acetylated low density lipoprotein. Binds to both Gram-positive and Gram-negative bacteria and may play a role in defense against bacterial infection. When inhibited in endothelial tube formation assays, there is a marked decrease in cell-cell interactions, suggesting a role in angiogenesis. Involved in the delivery of newly synthesized CHID1/SI-CLP from the biosynthetic compartment to the endosomal/lysosomal system.</text>
</comment>
<comment type="subunit">
    <text evidence="9">Interacts with CHID1.</text>
</comment>
<comment type="interaction">
    <interactant intactId="EBI-2797815">
        <id>Q9NY15</id>
    </interactant>
    <interactant intactId="EBI-1220319">
        <id>P02751</id>
        <label>FN1</label>
    </interactant>
    <organismsDiffer>false</organismsDiffer>
    <experiments>2</experiments>
</comment>
<comment type="subcellular location">
    <subcellularLocation>
        <location evidence="14">Membrane</location>
        <topology evidence="14">Single-pass type I membrane protein</topology>
    </subcellularLocation>
</comment>
<comment type="alternative products">
    <event type="alternative splicing"/>
    <isoform>
        <id>Q9NY15-1</id>
        <name evidence="7">1</name>
        <sequence type="displayed"/>
    </isoform>
    <isoform>
        <id>Q9NY15-2</id>
        <name evidence="7">2</name>
        <sequence type="described" ref="VSP_050764 VSP_050765"/>
    </isoform>
</comment>
<comment type="tissue specificity">
    <text evidence="6 7">High levels found in spleen, lymph node, liver and placenta. Also expressed in endothelial cells.</text>
</comment>
<comment type="disease" evidence="11">
    <disease id="DI-06851">
        <name>Hyperferritinemia</name>
        <acronym>HRFT</acronym>
        <description>An autosomal recessive condition characterized by increased serum ferritin levels in the absence of iron overload or other clinical symptoms.</description>
        <dbReference type="MIM" id="620729"/>
    </disease>
    <text>The disease may be caused by variants affecting the gene represented in this entry.</text>
</comment>
<comment type="sequence caution" evidence="14">
    <conflict type="erroneous initiation">
        <sequence resource="EMBL-CDS" id="BAA13377"/>
    </conflict>
    <text>Extended N-terminus.</text>
</comment>
<accession>Q9NY15</accession>
<accession>A7E297</accession>
<accession>Q8IUH0</accession>
<accession>Q8IUH1</accession>
<accession>Q93072</accession>
<keyword id="KW-0025">Alternative splicing</keyword>
<keyword id="KW-0225">Disease variant</keyword>
<keyword id="KW-1015">Disulfide bond</keyword>
<keyword id="KW-0245">EGF-like domain</keyword>
<keyword id="KW-0325">Glycoprotein</keyword>
<keyword id="KW-0395">Inflammatory response</keyword>
<keyword id="KW-0424">Laminin EGF-like domain</keyword>
<keyword id="KW-0472">Membrane</keyword>
<keyword id="KW-1267">Proteomics identification</keyword>
<keyword id="KW-0675">Receptor</keyword>
<keyword id="KW-1185">Reference proteome</keyword>
<keyword id="KW-0677">Repeat</keyword>
<keyword id="KW-0732">Signal</keyword>
<keyword id="KW-0812">Transmembrane</keyword>
<keyword id="KW-1133">Transmembrane helix</keyword>
<organism evidence="16">
    <name type="scientific">Homo sapiens</name>
    <name type="common">Human</name>
    <dbReference type="NCBI Taxonomy" id="9606"/>
    <lineage>
        <taxon>Eukaryota</taxon>
        <taxon>Metazoa</taxon>
        <taxon>Chordata</taxon>
        <taxon>Craniata</taxon>
        <taxon>Vertebrata</taxon>
        <taxon>Euteleostomi</taxon>
        <taxon>Mammalia</taxon>
        <taxon>Eutheria</taxon>
        <taxon>Euarchontoglires</taxon>
        <taxon>Primates</taxon>
        <taxon>Haplorrhini</taxon>
        <taxon>Catarrhini</taxon>
        <taxon>Hominidae</taxon>
        <taxon>Homo</taxon>
    </lineage>
</organism>
<feature type="signal peptide" evidence="2">
    <location>
        <begin position="1"/>
        <end position="25"/>
    </location>
</feature>
<feature type="chain" id="PRO_0000007710" description="Stabilin-1">
    <location>
        <begin position="26"/>
        <end position="2570"/>
    </location>
</feature>
<feature type="topological domain" description="Extracellular" evidence="2">
    <location>
        <begin position="26"/>
        <end position="2478"/>
    </location>
</feature>
<feature type="transmembrane region" description="Helical" evidence="2">
    <location>
        <begin position="2479"/>
        <end position="2499"/>
    </location>
</feature>
<feature type="topological domain" description="Cytoplasmic" evidence="2">
    <location>
        <begin position="2500"/>
        <end position="2570"/>
    </location>
</feature>
<feature type="domain" description="EGF-like 1" evidence="3 14">
    <location>
        <begin position="110"/>
        <end position="148"/>
    </location>
</feature>
<feature type="domain" description="EGF-like 2" evidence="3 14">
    <location>
        <begin position="156"/>
        <end position="193"/>
    </location>
</feature>
<feature type="domain" description="EGF-like 3" evidence="3 14">
    <location>
        <begin position="195"/>
        <end position="229"/>
    </location>
</feature>
<feature type="domain" description="EGF-like 4" evidence="3 14">
    <location>
        <begin position="232"/>
        <end position="271"/>
    </location>
</feature>
<feature type="domain" description="FAS1 1" evidence="4 14">
    <location>
        <begin position="356"/>
        <end position="494"/>
    </location>
</feature>
<feature type="domain" description="FAS1 2" evidence="4 14">
    <location>
        <begin position="506"/>
        <end position="641"/>
    </location>
</feature>
<feature type="domain" description="EGF-like 5" evidence="3 14">
    <location>
        <begin position="728"/>
        <end position="768"/>
    </location>
</feature>
<feature type="domain" description="EGF-like 6" evidence="3 14">
    <location>
        <begin position="818"/>
        <end position="858"/>
    </location>
</feature>
<feature type="domain" description="EGF-like 7" evidence="3 14">
    <location>
        <begin position="861"/>
        <end position="903"/>
    </location>
</feature>
<feature type="domain" description="EGF-like 8" evidence="3 14">
    <location>
        <begin position="904"/>
        <end position="946"/>
    </location>
</feature>
<feature type="domain" description="EGF-like 9" evidence="3 14">
    <location>
        <begin position="947"/>
        <end position="986"/>
    </location>
</feature>
<feature type="domain" description="FAS1 3" evidence="4 14">
    <location>
        <begin position="988"/>
        <end position="1118"/>
    </location>
</feature>
<feature type="domain" description="FAS1 4" evidence="4 14">
    <location>
        <begin position="1128"/>
        <end position="1253"/>
    </location>
</feature>
<feature type="domain" description="Laminin EGF-like 1" evidence="14">
    <location>
        <begin position="1327"/>
        <end position="1392"/>
    </location>
</feature>
<feature type="domain" description="EGF-like 10" evidence="3 14">
    <location>
        <begin position="1416"/>
        <end position="1454"/>
    </location>
</feature>
<feature type="domain" description="EGF-like 11" evidence="3 14">
    <location>
        <begin position="1455"/>
        <end position="1496"/>
    </location>
</feature>
<feature type="domain" description="EGF-like 12" evidence="3 14">
    <location>
        <begin position="1497"/>
        <end position="1539"/>
    </location>
</feature>
<feature type="domain" description="EGF-like 13" evidence="3 14">
    <location>
        <begin position="1540"/>
        <end position="1582"/>
    </location>
</feature>
<feature type="domain" description="FAS1 5" evidence="4 14">
    <location>
        <begin position="1582"/>
        <end position="1708"/>
    </location>
</feature>
<feature type="domain" description="FAS1 6" evidence="4 14">
    <location>
        <begin position="1724"/>
        <end position="1864"/>
    </location>
</feature>
<feature type="domain" description="Laminin EGF-like 2" evidence="14">
    <location>
        <begin position="1966"/>
        <end position="2031"/>
    </location>
</feature>
<feature type="domain" description="EGF-like 14" evidence="3 14">
    <location>
        <begin position="2056"/>
        <end position="2090"/>
    </location>
</feature>
<feature type="domain" description="EGF-like 15" evidence="3 14">
    <location>
        <begin position="2091"/>
        <end position="2131"/>
    </location>
</feature>
<feature type="domain" description="EGF-like 16" evidence="3 14">
    <location>
        <begin position="2132"/>
        <end position="2174"/>
    </location>
</feature>
<feature type="domain" description="Link" evidence="5 14">
    <location>
        <begin position="2206"/>
        <end position="2301"/>
    </location>
</feature>
<feature type="domain" description="FAS1 7" evidence="4 14">
    <location>
        <begin position="2322"/>
        <end position="2459"/>
    </location>
</feature>
<feature type="glycosylation site" description="N-linked (GlcNAc...) asparagine" evidence="2">
    <location>
        <position position="133"/>
    </location>
</feature>
<feature type="glycosylation site" description="N-linked (GlcNAc...) asparagine" evidence="2">
    <location>
        <position position="286"/>
    </location>
</feature>
<feature type="glycosylation site" description="N-linked (GlcNAc...) asparagine" evidence="2">
    <location>
        <position position="312"/>
    </location>
</feature>
<feature type="glycosylation site" description="N-linked (GlcNAc...) asparagine" evidence="2">
    <location>
        <position position="413"/>
    </location>
</feature>
<feature type="glycosylation site" description="N-linked (GlcNAc...) asparagine" evidence="2">
    <location>
        <position position="606"/>
    </location>
</feature>
<feature type="glycosylation site" description="N-linked (GlcNAc...) asparagine" evidence="2">
    <location>
        <position position="673"/>
    </location>
</feature>
<feature type="glycosylation site" description="N-linked (GlcNAc...) asparagine" evidence="2">
    <location>
        <position position="712"/>
    </location>
</feature>
<feature type="glycosylation site" description="N-linked (GlcNAc...) asparagine" evidence="2">
    <location>
        <position position="745"/>
    </location>
</feature>
<feature type="glycosylation site" description="N-linked (GlcNAc...) asparagine" evidence="2">
    <location>
        <position position="816"/>
    </location>
</feature>
<feature type="glycosylation site" description="N-linked (GlcNAc...) asparagine" evidence="2">
    <location>
        <position position="1087"/>
    </location>
</feature>
<feature type="glycosylation site" description="N-linked (GlcNAc...) asparagine" evidence="10">
    <location>
        <position position="1096"/>
    </location>
</feature>
<feature type="glycosylation site" description="N-linked (GlcNAc...) asparagine" evidence="2">
    <location>
        <position position="1170"/>
    </location>
</feature>
<feature type="glycosylation site" description="N-linked (GlcNAc...) asparagine" evidence="2">
    <location>
        <position position="1178"/>
    </location>
</feature>
<feature type="glycosylation site" description="N-linked (GlcNAc...) asparagine" evidence="2">
    <location>
        <position position="1222"/>
    </location>
</feature>
<feature type="glycosylation site" description="N-linked (GlcNAc...) asparagine" evidence="2">
    <location>
        <position position="1274"/>
    </location>
</feature>
<feature type="glycosylation site" description="N-linked (GlcNAc...) asparagine" evidence="2">
    <location>
        <position position="1378"/>
    </location>
</feature>
<feature type="glycosylation site" description="N-linked (GlcNAc...) asparagine" evidence="2">
    <location>
        <position position="1471"/>
    </location>
</feature>
<feature type="glycosylation site" description="N-linked (GlcNAc...) asparagine" evidence="10">
    <location>
        <position position="1626"/>
    </location>
</feature>
<feature type="glycosylation site" description="N-linked (GlcNAc...) asparagine" evidence="10">
    <location>
        <position position="1727"/>
    </location>
</feature>
<feature type="glycosylation site" description="N-linked (GlcNAc...) asparagine" evidence="2">
    <location>
        <position position="2107"/>
    </location>
</feature>
<feature type="glycosylation site" description="N-linked (GlcNAc...) asparagine" evidence="2">
    <location>
        <position position="2222"/>
    </location>
</feature>
<feature type="glycosylation site" description="N-linked (GlcNAc...) asparagine" evidence="2">
    <location>
        <position position="2261"/>
    </location>
</feature>
<feature type="glycosylation site" description="N-linked (GlcNAc...) asparagine" evidence="2">
    <location>
        <position position="2290"/>
    </location>
</feature>
<feature type="glycosylation site" description="N-linked (GlcNAc...) asparagine" evidence="2">
    <location>
        <position position="2334"/>
    </location>
</feature>
<feature type="glycosylation site" description="N-linked (GlcNAc...) asparagine" evidence="10">
    <location>
        <position position="2347"/>
    </location>
</feature>
<feature type="glycosylation site" description="N-linked (GlcNAc...) asparagine" evidence="2">
    <location>
        <position position="2379"/>
    </location>
</feature>
<feature type="glycosylation site" description="N-linked (GlcNAc...) asparagine" evidence="2">
    <location>
        <position position="2393"/>
    </location>
</feature>
<feature type="glycosylation site" description="N-linked (GlcNAc...) asparagine" evidence="2">
    <location>
        <position position="2400"/>
    </location>
</feature>
<feature type="glycosylation site" description="N-linked (GlcNAc...) asparagine" evidence="10">
    <location>
        <position position="2424"/>
    </location>
</feature>
<feature type="disulfide bond" evidence="1">
    <location>
        <begin position="112"/>
        <end position="126"/>
    </location>
</feature>
<feature type="disulfide bond" evidence="1">
    <location>
        <begin position="120"/>
        <end position="136"/>
    </location>
</feature>
<feature type="disulfide bond" evidence="1">
    <location>
        <begin position="138"/>
        <end position="147"/>
    </location>
</feature>
<feature type="disulfide bond" evidence="1">
    <location>
        <begin position="160"/>
        <end position="171"/>
    </location>
</feature>
<feature type="disulfide bond" evidence="1">
    <location>
        <begin position="164"/>
        <end position="181"/>
    </location>
</feature>
<feature type="disulfide bond" evidence="1">
    <location>
        <begin position="183"/>
        <end position="192"/>
    </location>
</feature>
<feature type="disulfide bond" evidence="1">
    <location>
        <begin position="199"/>
        <end position="210"/>
    </location>
</feature>
<feature type="disulfide bond" evidence="1">
    <location>
        <begin position="204"/>
        <end position="217"/>
    </location>
</feature>
<feature type="disulfide bond" evidence="1">
    <location>
        <begin position="236"/>
        <end position="247"/>
    </location>
</feature>
<feature type="disulfide bond" evidence="1">
    <location>
        <begin position="241"/>
        <end position="257"/>
    </location>
</feature>
<feature type="disulfide bond" evidence="1">
    <location>
        <begin position="259"/>
        <end position="270"/>
    </location>
</feature>
<feature type="disulfide bond" evidence="1">
    <location>
        <begin position="732"/>
        <end position="746"/>
    </location>
</feature>
<feature type="disulfide bond" evidence="1">
    <location>
        <begin position="740"/>
        <end position="756"/>
    </location>
</feature>
<feature type="disulfide bond" evidence="1">
    <location>
        <begin position="758"/>
        <end position="767"/>
    </location>
</feature>
<feature type="disulfide bond" evidence="1">
    <location>
        <begin position="822"/>
        <end position="837"/>
    </location>
</feature>
<feature type="disulfide bond" evidence="1">
    <location>
        <begin position="831"/>
        <end position="846"/>
    </location>
</feature>
<feature type="disulfide bond" evidence="1">
    <location>
        <begin position="865"/>
        <end position="879"/>
    </location>
</feature>
<feature type="disulfide bond" evidence="1">
    <location>
        <begin position="873"/>
        <end position="889"/>
    </location>
</feature>
<feature type="disulfide bond" evidence="1">
    <location>
        <begin position="891"/>
        <end position="902"/>
    </location>
</feature>
<feature type="disulfide bond" evidence="1">
    <location>
        <begin position="908"/>
        <end position="922"/>
    </location>
</feature>
<feature type="disulfide bond" evidence="1">
    <location>
        <begin position="916"/>
        <end position="932"/>
    </location>
</feature>
<feature type="disulfide bond" evidence="1">
    <location>
        <begin position="934"/>
        <end position="945"/>
    </location>
</feature>
<feature type="disulfide bond" evidence="1">
    <location>
        <begin position="951"/>
        <end position="964"/>
    </location>
</feature>
<feature type="disulfide bond" evidence="1">
    <location>
        <begin position="958"/>
        <end position="974"/>
    </location>
</feature>
<feature type="disulfide bond" evidence="1">
    <location>
        <begin position="1332"/>
        <end position="1346"/>
    </location>
</feature>
<feature type="disulfide bond" evidence="1">
    <location>
        <begin position="1340"/>
        <end position="1356"/>
    </location>
</feature>
<feature type="disulfide bond" evidence="1">
    <location>
        <begin position="1358"/>
        <end position="1367"/>
    </location>
</feature>
<feature type="disulfide bond" evidence="1">
    <location>
        <begin position="1379"/>
        <end position="1390"/>
    </location>
</feature>
<feature type="disulfide bond" evidence="1">
    <location>
        <begin position="1383"/>
        <end position="1400"/>
    </location>
</feature>
<feature type="disulfide bond" evidence="1">
    <location>
        <begin position="1402"/>
        <end position="1411"/>
    </location>
</feature>
<feature type="disulfide bond" evidence="1">
    <location>
        <begin position="1420"/>
        <end position="1430"/>
    </location>
</feature>
<feature type="disulfide bond" evidence="1">
    <location>
        <begin position="1424"/>
        <end position="1440"/>
    </location>
</feature>
<feature type="disulfide bond" evidence="1">
    <location>
        <begin position="1442"/>
        <end position="1453"/>
    </location>
</feature>
<feature type="disulfide bond" evidence="1">
    <location>
        <begin position="1459"/>
        <end position="1472"/>
    </location>
</feature>
<feature type="disulfide bond" evidence="1">
    <location>
        <begin position="1466"/>
        <end position="1482"/>
    </location>
</feature>
<feature type="disulfide bond" evidence="1">
    <location>
        <begin position="1484"/>
        <end position="1495"/>
    </location>
</feature>
<feature type="disulfide bond" evidence="1">
    <location>
        <begin position="1501"/>
        <end position="1514"/>
    </location>
</feature>
<feature type="disulfide bond" evidence="1">
    <location>
        <begin position="1508"/>
        <end position="1524"/>
    </location>
</feature>
<feature type="disulfide bond" evidence="1">
    <location>
        <begin position="1526"/>
        <end position="1538"/>
    </location>
</feature>
<feature type="disulfide bond" evidence="1">
    <location>
        <begin position="1544"/>
        <end position="1557"/>
    </location>
</feature>
<feature type="disulfide bond" evidence="1">
    <location>
        <begin position="1551"/>
        <end position="1567"/>
    </location>
</feature>
<feature type="disulfide bond" evidence="1">
    <location>
        <begin position="1569"/>
        <end position="1581"/>
    </location>
</feature>
<feature type="disulfide bond" evidence="1">
    <location>
        <begin position="1971"/>
        <end position="1985"/>
    </location>
</feature>
<feature type="disulfide bond" evidence="1">
    <location>
        <begin position="1979"/>
        <end position="1995"/>
    </location>
</feature>
<feature type="disulfide bond" evidence="1">
    <location>
        <begin position="1997"/>
        <end position="2006"/>
    </location>
</feature>
<feature type="disulfide bond" evidence="1">
    <location>
        <begin position="2018"/>
        <end position="2029"/>
    </location>
</feature>
<feature type="disulfide bond" evidence="1">
    <location>
        <begin position="2023"/>
        <end position="2039"/>
    </location>
</feature>
<feature type="disulfide bond" evidence="1">
    <location>
        <begin position="2041"/>
        <end position="2050"/>
    </location>
</feature>
<feature type="disulfide bond" evidence="1">
    <location>
        <begin position="2060"/>
        <end position="2070"/>
    </location>
</feature>
<feature type="disulfide bond" evidence="1">
    <location>
        <begin position="2064"/>
        <end position="2076"/>
    </location>
</feature>
<feature type="disulfide bond" evidence="1">
    <location>
        <begin position="2078"/>
        <end position="2089"/>
    </location>
</feature>
<feature type="disulfide bond" evidence="1">
    <location>
        <begin position="2095"/>
        <end position="2108"/>
    </location>
</feature>
<feature type="disulfide bond" evidence="1">
    <location>
        <begin position="2102"/>
        <end position="2117"/>
    </location>
</feature>
<feature type="disulfide bond" evidence="1">
    <location>
        <begin position="2119"/>
        <end position="2130"/>
    </location>
</feature>
<feature type="disulfide bond" evidence="1">
    <location>
        <begin position="2136"/>
        <end position="2150"/>
    </location>
</feature>
<feature type="disulfide bond" evidence="1">
    <location>
        <begin position="2144"/>
        <end position="2160"/>
    </location>
</feature>
<feature type="disulfide bond" evidence="1">
    <location>
        <begin position="2162"/>
        <end position="2173"/>
    </location>
</feature>
<feature type="disulfide bond" evidence="1">
    <location>
        <begin position="2230"/>
        <end position="2299"/>
    </location>
</feature>
<feature type="disulfide bond" evidence="1">
    <location>
        <begin position="2254"/>
        <end position="2275"/>
    </location>
</feature>
<feature type="splice variant" id="VSP_050764" description="In isoform 2." evidence="13">
    <original>CSDGIQGNGACLCFPDYKGIACHICSNPNKHGEQCQEDCGCVHGLCDNRPGSGGVCQQ</original>
    <variation>VSPILSWGEVWGTQGLLHRLASDWLCVWAKPATLALGFSYLCSGKLDQIISHILIKNN</variation>
    <location>
        <begin position="746"/>
        <end position="803"/>
    </location>
</feature>
<feature type="splice variant" id="VSP_050765" description="In isoform 2." evidence="13">
    <location>
        <begin position="804"/>
        <end position="2570"/>
    </location>
</feature>
<feature type="sequence variant" id="VAR_089380" description="In HRFT; uncertain significance; dbSNP:rs778572255." evidence="11">
    <original>C</original>
    <variation>S</variation>
    <location>
        <position position="120"/>
    </location>
</feature>
<feature type="sequence variant" id="VAR_089381" description="In HRFT; uncertain significance; dbSNP:rs754318051." evidence="11">
    <original>E</original>
    <variation>K</variation>
    <location>
        <position position="348"/>
    </location>
</feature>
<feature type="sequence variant" id="VAR_060338" description="In dbSNP:rs12636502.">
    <original>L</original>
    <variation>M</variation>
    <location>
        <position position="672"/>
    </location>
</feature>
<feature type="sequence variant" id="VAR_089382" description="In HRFT; uncertain significance." evidence="11">
    <location>
        <begin position="724"/>
        <end position="726"/>
    </location>
</feature>
<feature type="sequence variant" id="VAR_060339" description="In dbSNP:rs9835659." evidence="6 7 8 12">
    <original>M</original>
    <variation>V</variation>
    <location>
        <position position="912"/>
    </location>
</feature>
<feature type="sequence variant" id="VAR_055774" description="In dbSNP:rs2286786.">
    <original>G</original>
    <variation>R</variation>
    <location>
        <position position="1127"/>
    </location>
</feature>
<feature type="sequence variant" id="VAR_060340" description="In dbSNP:rs7630214." evidence="6 8 12">
    <original>A</original>
    <variation>P</variation>
    <location>
        <position position="1833"/>
    </location>
</feature>
<feature type="sequence variant" id="VAR_089383" description="In HRFT; uncertain significance; dbSNP:rs141939118." evidence="11">
    <original>S</original>
    <variation>P</variation>
    <location>
        <position position="2244"/>
    </location>
</feature>
<feature type="sequence variant" id="VAR_055775" description="In dbSNP:rs4434138." evidence="6">
    <original>I</original>
    <variation>V</variation>
    <location>
        <position position="2282"/>
    </location>
</feature>
<feature type="sequence variant" id="VAR_089384" description="In HRFT; uncertain significance; dbSNP:rs1484029620." evidence="11">
    <original>Y</original>
    <variation>C</variation>
    <location>
        <position position="2339"/>
    </location>
</feature>
<feature type="sequence variant" id="VAR_089385" description="In HRFT; uncertain significance; dbSNP:rs748728975." evidence="11">
    <location>
        <begin position="2443"/>
        <end position="2570"/>
    </location>
</feature>
<feature type="sequence variant" id="VAR_019078" description="In dbSNP:rs13303.">
    <original>M</original>
    <variation>T</variation>
    <location>
        <position position="2506"/>
    </location>
</feature>
<feature type="sequence conflict" description="In Ref. 1; CAB61827." evidence="14" ref="1">
    <original>R</original>
    <variation>G</variation>
    <location>
        <position position="913"/>
    </location>
</feature>
<feature type="sequence conflict" description="In Ref. 1; CAB61827." evidence="14" ref="1">
    <original>L</original>
    <variation>Q</variation>
    <location>
        <position position="2200"/>
    </location>
</feature>
<gene>
    <name type="primary">STAB1</name>
    <name type="synonym">FEEL1</name>
    <name type="synonym">KIAA0246</name>
</gene>
<name>STAB1_HUMAN</name>
<evidence type="ECO:0000250" key="1"/>
<evidence type="ECO:0000255" key="2"/>
<evidence type="ECO:0000255" key="3">
    <source>
        <dbReference type="PROSITE-ProRule" id="PRU00076"/>
    </source>
</evidence>
<evidence type="ECO:0000255" key="4">
    <source>
        <dbReference type="PROSITE-ProRule" id="PRU00082"/>
    </source>
</evidence>
<evidence type="ECO:0000255" key="5">
    <source>
        <dbReference type="PROSITE-ProRule" id="PRU00323"/>
    </source>
</evidence>
<evidence type="ECO:0000269" key="6">
    <source>
    </source>
</evidence>
<evidence type="ECO:0000269" key="7">
    <source>
    </source>
</evidence>
<evidence type="ECO:0000269" key="8">
    <source>
    </source>
</evidence>
<evidence type="ECO:0000269" key="9">
    <source>
    </source>
</evidence>
<evidence type="ECO:0000269" key="10">
    <source>
    </source>
</evidence>
<evidence type="ECO:0000269" key="11">
    <source>
    </source>
</evidence>
<evidence type="ECO:0000269" key="12">
    <source>
    </source>
</evidence>
<evidence type="ECO:0000303" key="13">
    <source>
    </source>
</evidence>
<evidence type="ECO:0000305" key="14"/>
<evidence type="ECO:0000312" key="15">
    <source>
        <dbReference type="EMBL" id="BAA13377.2"/>
    </source>
</evidence>
<evidence type="ECO:0000312" key="16">
    <source>
        <dbReference type="EMBL" id="CAB61827.1"/>
    </source>
</evidence>
<dbReference type="EMBL" id="AJ275213">
    <property type="protein sequence ID" value="CAB61827.1"/>
    <property type="molecule type" value="mRNA"/>
</dbReference>
<dbReference type="EMBL" id="AB052956">
    <property type="protein sequence ID" value="BAC15606.1"/>
    <property type="molecule type" value="mRNA"/>
</dbReference>
<dbReference type="EMBL" id="AB052957">
    <property type="protein sequence ID" value="BAC15607.1"/>
    <property type="molecule type" value="mRNA"/>
</dbReference>
<dbReference type="EMBL" id="D87433">
    <property type="protein sequence ID" value="BAA13377.2"/>
    <property type="status" value="ALT_INIT"/>
    <property type="molecule type" value="mRNA"/>
</dbReference>
<dbReference type="EMBL" id="AC006208">
    <property type="status" value="NOT_ANNOTATED_CDS"/>
    <property type="molecule type" value="Genomic_DNA"/>
</dbReference>
<dbReference type="EMBL" id="AC112215">
    <property type="status" value="NOT_ANNOTATED_CDS"/>
    <property type="molecule type" value="Genomic_DNA"/>
</dbReference>
<dbReference type="EMBL" id="BC150250">
    <property type="protein sequence ID" value="AAI50251.1"/>
    <property type="molecule type" value="mRNA"/>
</dbReference>
<dbReference type="CCDS" id="CCDS33768.1">
    <molecule id="Q9NY15-1"/>
</dbReference>
<dbReference type="RefSeq" id="NP_055951.2">
    <molecule id="Q9NY15-1"/>
    <property type="nucleotide sequence ID" value="NM_015136.3"/>
</dbReference>
<dbReference type="SMR" id="Q9NY15"/>
<dbReference type="BioGRID" id="116778">
    <property type="interactions" value="12"/>
</dbReference>
<dbReference type="ELM" id="Q9NY15"/>
<dbReference type="FunCoup" id="Q9NY15">
    <property type="interactions" value="69"/>
</dbReference>
<dbReference type="IntAct" id="Q9NY15">
    <property type="interactions" value="76"/>
</dbReference>
<dbReference type="MINT" id="Q9NY15"/>
<dbReference type="STRING" id="9606.ENSP00000312946"/>
<dbReference type="GuidetoPHARMACOLOGY" id="3247"/>
<dbReference type="TCDB" id="9.B.87.1.22">
    <property type="family name" value="the selenoprotein p receptor (selp-receptor) family"/>
</dbReference>
<dbReference type="GlyConnect" id="681">
    <property type="glycosylation" value="7 N-Linked glycans (7 sites)"/>
</dbReference>
<dbReference type="GlyCosmos" id="Q9NY15">
    <property type="glycosylation" value="29 sites, 12 glycans"/>
</dbReference>
<dbReference type="GlyGen" id="Q9NY15">
    <property type="glycosylation" value="31 sites, 60 N-linked glycans (13 sites)"/>
</dbReference>
<dbReference type="iPTMnet" id="Q9NY15"/>
<dbReference type="PhosphoSitePlus" id="Q9NY15"/>
<dbReference type="BioMuta" id="STAB1"/>
<dbReference type="DMDM" id="296452949"/>
<dbReference type="jPOST" id="Q9NY15"/>
<dbReference type="MassIVE" id="Q9NY15"/>
<dbReference type="PaxDb" id="9606-ENSP00000312946"/>
<dbReference type="PeptideAtlas" id="Q9NY15"/>
<dbReference type="ProteomicsDB" id="83149">
    <molecule id="Q9NY15-1"/>
</dbReference>
<dbReference type="ProteomicsDB" id="83150">
    <molecule id="Q9NY15-2"/>
</dbReference>
<dbReference type="Antibodypedia" id="1505">
    <property type="antibodies" value="149 antibodies from 33 providers"/>
</dbReference>
<dbReference type="DNASU" id="23166"/>
<dbReference type="Ensembl" id="ENST00000321725.10">
    <molecule id="Q9NY15-1"/>
    <property type="protein sequence ID" value="ENSP00000312946.6"/>
    <property type="gene ID" value="ENSG00000010327.10"/>
</dbReference>
<dbReference type="GeneID" id="23166"/>
<dbReference type="KEGG" id="hsa:23166"/>
<dbReference type="MANE-Select" id="ENST00000321725.10">
    <property type="protein sequence ID" value="ENSP00000312946.6"/>
    <property type="RefSeq nucleotide sequence ID" value="NM_015136.3"/>
    <property type="RefSeq protein sequence ID" value="NP_055951.2"/>
</dbReference>
<dbReference type="UCSC" id="uc003dej.4">
    <molecule id="Q9NY15-1"/>
    <property type="organism name" value="human"/>
</dbReference>
<dbReference type="AGR" id="HGNC:18628"/>
<dbReference type="CTD" id="23166"/>
<dbReference type="DisGeNET" id="23166"/>
<dbReference type="GeneCards" id="STAB1"/>
<dbReference type="HGNC" id="HGNC:18628">
    <property type="gene designation" value="STAB1"/>
</dbReference>
<dbReference type="HPA" id="ENSG00000010327">
    <property type="expression patterns" value="Tissue enhanced (lymphoid)"/>
</dbReference>
<dbReference type="MalaCards" id="STAB1"/>
<dbReference type="MIM" id="608560">
    <property type="type" value="gene"/>
</dbReference>
<dbReference type="MIM" id="620729">
    <property type="type" value="phenotype"/>
</dbReference>
<dbReference type="neXtProt" id="NX_Q9NY15"/>
<dbReference type="OpenTargets" id="ENSG00000010327"/>
<dbReference type="PharmGKB" id="PA38610"/>
<dbReference type="VEuPathDB" id="HostDB:ENSG00000010327"/>
<dbReference type="eggNOG" id="KOG1218">
    <property type="taxonomic scope" value="Eukaryota"/>
</dbReference>
<dbReference type="GeneTree" id="ENSGT00940000157928"/>
<dbReference type="HOGENOM" id="CLU_001035_0_0_1"/>
<dbReference type="InParanoid" id="Q9NY15"/>
<dbReference type="OMA" id="GCHMHAE"/>
<dbReference type="OrthoDB" id="286301at2759"/>
<dbReference type="PAN-GO" id="Q9NY15">
    <property type="GO annotations" value="0 GO annotations based on evolutionary models"/>
</dbReference>
<dbReference type="PhylomeDB" id="Q9NY15"/>
<dbReference type="TreeFam" id="TF331489"/>
<dbReference type="PathwayCommons" id="Q9NY15"/>
<dbReference type="Reactome" id="R-HSA-3000497">
    <property type="pathway name" value="Scavenging by Class H Receptors"/>
</dbReference>
<dbReference type="SignaLink" id="Q9NY15"/>
<dbReference type="BioGRID-ORCS" id="23166">
    <property type="hits" value="25 hits in 1151 CRISPR screens"/>
</dbReference>
<dbReference type="ChiTaRS" id="STAB1">
    <property type="organism name" value="human"/>
</dbReference>
<dbReference type="GeneWiki" id="STAB1"/>
<dbReference type="GenomeRNAi" id="23166"/>
<dbReference type="Pharos" id="Q9NY15">
    <property type="development level" value="Tbio"/>
</dbReference>
<dbReference type="PRO" id="PR:Q9NY15"/>
<dbReference type="Proteomes" id="UP000005640">
    <property type="component" value="Chromosome 3"/>
</dbReference>
<dbReference type="RNAct" id="Q9NY15">
    <property type="molecule type" value="protein"/>
</dbReference>
<dbReference type="Bgee" id="ENSG00000010327">
    <property type="expression patterns" value="Expressed in spleen and 153 other cell types or tissues"/>
</dbReference>
<dbReference type="ExpressionAtlas" id="Q9NY15">
    <property type="expression patterns" value="baseline and differential"/>
</dbReference>
<dbReference type="GO" id="GO:0030666">
    <property type="term" value="C:endocytic vesicle membrane"/>
    <property type="evidence" value="ECO:0000304"/>
    <property type="project" value="Reactome"/>
</dbReference>
<dbReference type="GO" id="GO:0005886">
    <property type="term" value="C:plasma membrane"/>
    <property type="evidence" value="ECO:0000314"/>
    <property type="project" value="UniProtKB"/>
</dbReference>
<dbReference type="GO" id="GO:0005509">
    <property type="term" value="F:calcium ion binding"/>
    <property type="evidence" value="ECO:0007669"/>
    <property type="project" value="InterPro"/>
</dbReference>
<dbReference type="GO" id="GO:0005540">
    <property type="term" value="F:hyaluronic acid binding"/>
    <property type="evidence" value="ECO:0007669"/>
    <property type="project" value="InterPro"/>
</dbReference>
<dbReference type="GO" id="GO:0030169">
    <property type="term" value="F:low-density lipoprotein particle binding"/>
    <property type="evidence" value="ECO:0000314"/>
    <property type="project" value="UniProtKB"/>
</dbReference>
<dbReference type="GO" id="GO:0005041">
    <property type="term" value="F:low-density lipoprotein particle receptor activity"/>
    <property type="evidence" value="ECO:0000314"/>
    <property type="project" value="UniProtKB"/>
</dbReference>
<dbReference type="GO" id="GO:0015035">
    <property type="term" value="F:protein-disulfide reductase activity"/>
    <property type="evidence" value="ECO:0000303"/>
    <property type="project" value="UniProtKB"/>
</dbReference>
<dbReference type="GO" id="GO:0005044">
    <property type="term" value="F:scavenger receptor activity"/>
    <property type="evidence" value="ECO:0000314"/>
    <property type="project" value="UniProtKB"/>
</dbReference>
<dbReference type="GO" id="GO:0007155">
    <property type="term" value="P:cell adhesion"/>
    <property type="evidence" value="ECO:0000303"/>
    <property type="project" value="UniProtKB"/>
</dbReference>
<dbReference type="GO" id="GO:0007267">
    <property type="term" value="P:cell-cell signaling"/>
    <property type="evidence" value="ECO:0000314"/>
    <property type="project" value="UniProtKB"/>
</dbReference>
<dbReference type="GO" id="GO:0042742">
    <property type="term" value="P:defense response to bacterium"/>
    <property type="evidence" value="ECO:0000314"/>
    <property type="project" value="UniProtKB"/>
</dbReference>
<dbReference type="GO" id="GO:0006954">
    <property type="term" value="P:inflammatory response"/>
    <property type="evidence" value="ECO:0007669"/>
    <property type="project" value="UniProtKB-KW"/>
</dbReference>
<dbReference type="GO" id="GO:0016525">
    <property type="term" value="P:negative regulation of angiogenesis"/>
    <property type="evidence" value="ECO:0000315"/>
    <property type="project" value="UniProtKB"/>
</dbReference>
<dbReference type="GO" id="GO:0006898">
    <property type="term" value="P:receptor-mediated endocytosis"/>
    <property type="evidence" value="ECO:0000304"/>
    <property type="project" value="UniProtKB"/>
</dbReference>
<dbReference type="CDD" id="cd00055">
    <property type="entry name" value="EGF_Lam"/>
    <property type="match status" value="1"/>
</dbReference>
<dbReference type="FunFam" id="3.10.100.10:FF:000001">
    <property type="entry name" value="Hyaluronan proteoglycan link protein 1"/>
    <property type="match status" value="1"/>
</dbReference>
<dbReference type="FunFam" id="2.30.180.10:FF:000014">
    <property type="entry name" value="Stabilin 1"/>
    <property type="match status" value="1"/>
</dbReference>
<dbReference type="FunFam" id="2.30.180.10:FF:000026">
    <property type="entry name" value="Stabilin 1"/>
    <property type="match status" value="1"/>
</dbReference>
<dbReference type="FunFam" id="2.30.180.10:FF:000030">
    <property type="entry name" value="Stabilin 1"/>
    <property type="match status" value="1"/>
</dbReference>
<dbReference type="FunFam" id="2.30.180.10:FF:000033">
    <property type="entry name" value="Stabilin 1"/>
    <property type="match status" value="1"/>
</dbReference>
<dbReference type="FunFam" id="2.30.180.10:FF:000036">
    <property type="entry name" value="Stabilin 1"/>
    <property type="match status" value="1"/>
</dbReference>
<dbReference type="FunFam" id="2.10.25.10:FF:000040">
    <property type="entry name" value="Stabilin 2"/>
    <property type="match status" value="4"/>
</dbReference>
<dbReference type="FunFam" id="2.10.25.10:FF:000278">
    <property type="entry name" value="Stabilin 2"/>
    <property type="match status" value="1"/>
</dbReference>
<dbReference type="FunFam" id="2.10.25.10:FF:000817">
    <property type="entry name" value="Stabilin 2"/>
    <property type="match status" value="1"/>
</dbReference>
<dbReference type="FunFam" id="2.30.180.10:FF:000005">
    <property type="entry name" value="Stabilin 2"/>
    <property type="match status" value="2"/>
</dbReference>
<dbReference type="FunFam" id="2.10.25.10:FF:000337">
    <property type="entry name" value="stabilin-1 isoform X1"/>
    <property type="match status" value="1"/>
</dbReference>
<dbReference type="Gene3D" id="2.30.180.10">
    <property type="entry name" value="FAS1 domain"/>
    <property type="match status" value="7"/>
</dbReference>
<dbReference type="Gene3D" id="2.10.25.10">
    <property type="entry name" value="Laminin"/>
    <property type="match status" value="13"/>
</dbReference>
<dbReference type="Gene3D" id="3.10.100.10">
    <property type="entry name" value="Mannose-Binding Protein A, subunit A"/>
    <property type="match status" value="1"/>
</dbReference>
<dbReference type="Gene3D" id="2.170.300.10">
    <property type="entry name" value="Tie2 ligand-binding domain superfamily"/>
    <property type="match status" value="1"/>
</dbReference>
<dbReference type="InterPro" id="IPR016186">
    <property type="entry name" value="C-type_lectin-like/link_sf"/>
</dbReference>
<dbReference type="InterPro" id="IPR016187">
    <property type="entry name" value="CTDL_fold"/>
</dbReference>
<dbReference type="InterPro" id="IPR001881">
    <property type="entry name" value="EGF-like_Ca-bd_dom"/>
</dbReference>
<dbReference type="InterPro" id="IPR000742">
    <property type="entry name" value="EGF-like_dom"/>
</dbReference>
<dbReference type="InterPro" id="IPR024731">
    <property type="entry name" value="EGF_dom"/>
</dbReference>
<dbReference type="InterPro" id="IPR056806">
    <property type="entry name" value="EGF_STAB1-2"/>
</dbReference>
<dbReference type="InterPro" id="IPR036378">
    <property type="entry name" value="FAS1_dom_sf"/>
</dbReference>
<dbReference type="InterPro" id="IPR000782">
    <property type="entry name" value="FAS1_domain"/>
</dbReference>
<dbReference type="InterPro" id="IPR002049">
    <property type="entry name" value="LE_dom"/>
</dbReference>
<dbReference type="InterPro" id="IPR000538">
    <property type="entry name" value="Link_dom"/>
</dbReference>
<dbReference type="PANTHER" id="PTHR24038">
    <property type="entry name" value="STABILIN"/>
    <property type="match status" value="1"/>
</dbReference>
<dbReference type="PANTHER" id="PTHR24038:SF8">
    <property type="entry name" value="STABILIN-1"/>
    <property type="match status" value="1"/>
</dbReference>
<dbReference type="Pfam" id="PF12947">
    <property type="entry name" value="EGF_3"/>
    <property type="match status" value="7"/>
</dbReference>
<dbReference type="Pfam" id="PF24887">
    <property type="entry name" value="EGF_STAB1-2"/>
    <property type="match status" value="2"/>
</dbReference>
<dbReference type="Pfam" id="PF02469">
    <property type="entry name" value="Fasciclin"/>
    <property type="match status" value="6"/>
</dbReference>
<dbReference type="Pfam" id="PF00193">
    <property type="entry name" value="Xlink"/>
    <property type="match status" value="1"/>
</dbReference>
<dbReference type="SMART" id="SM00181">
    <property type="entry name" value="EGF"/>
    <property type="match status" value="23"/>
</dbReference>
<dbReference type="SMART" id="SM00179">
    <property type="entry name" value="EGF_CA"/>
    <property type="match status" value="6"/>
</dbReference>
<dbReference type="SMART" id="SM00180">
    <property type="entry name" value="EGF_Lam"/>
    <property type="match status" value="4"/>
</dbReference>
<dbReference type="SMART" id="SM00554">
    <property type="entry name" value="FAS1"/>
    <property type="match status" value="7"/>
</dbReference>
<dbReference type="SMART" id="SM00445">
    <property type="entry name" value="LINK"/>
    <property type="match status" value="1"/>
</dbReference>
<dbReference type="SUPFAM" id="SSF56436">
    <property type="entry name" value="C-type lectin-like"/>
    <property type="match status" value="1"/>
</dbReference>
<dbReference type="SUPFAM" id="SSF57196">
    <property type="entry name" value="EGF/Laminin"/>
    <property type="match status" value="1"/>
</dbReference>
<dbReference type="SUPFAM" id="SSF82153">
    <property type="entry name" value="FAS1 domain"/>
    <property type="match status" value="7"/>
</dbReference>
<dbReference type="PROSITE" id="PS00022">
    <property type="entry name" value="EGF_1"/>
    <property type="match status" value="7"/>
</dbReference>
<dbReference type="PROSITE" id="PS01186">
    <property type="entry name" value="EGF_2"/>
    <property type="match status" value="16"/>
</dbReference>
<dbReference type="PROSITE" id="PS50026">
    <property type="entry name" value="EGF_3"/>
    <property type="match status" value="20"/>
</dbReference>
<dbReference type="PROSITE" id="PS01248">
    <property type="entry name" value="EGF_LAM_1"/>
    <property type="match status" value="2"/>
</dbReference>
<dbReference type="PROSITE" id="PS50213">
    <property type="entry name" value="FAS1"/>
    <property type="match status" value="7"/>
</dbReference>
<dbReference type="PROSITE" id="PS01241">
    <property type="entry name" value="LINK_1"/>
    <property type="match status" value="1"/>
</dbReference>
<dbReference type="PROSITE" id="PS50963">
    <property type="entry name" value="LINK_2"/>
    <property type="match status" value="1"/>
</dbReference>
<reference evidence="14" key="1">
    <citation type="journal article" date="2002" name="Biochem. J.">
        <title>Stabilin-1 and -2 constitute a novel family of fasciclin-like hyaluronan receptor homologues.</title>
        <authorList>
            <person name="Politz O."/>
            <person name="Gratchev A."/>
            <person name="McCourt P.A.G."/>
            <person name="Schledzewski K."/>
            <person name="Guillot P."/>
            <person name="Johansson S."/>
            <person name="Svineng G."/>
            <person name="Franke P."/>
            <person name="Kannicht C."/>
            <person name="Kzhyshkowska J."/>
            <person name="Longati P."/>
            <person name="Velten F.W."/>
            <person name="Johansson S."/>
            <person name="Goerdt S."/>
        </authorList>
    </citation>
    <scope>NUCLEOTIDE SEQUENCE [MRNA] (ISOFORM 1)</scope>
    <scope>TISSUE SPECIFICITY</scope>
    <scope>VARIANTS VAL-912; PRO-1833 AND VAL-2282</scope>
</reference>
<reference evidence="14" key="2">
    <citation type="journal article" date="2002" name="J. Biol. Chem.">
        <title>FEEL-1, a novel scavenger receptor with in vitro bacteria-binding and angiogenesis-modulating activities.</title>
        <authorList>
            <person name="Adachi H."/>
            <person name="Tsujimoto M."/>
        </authorList>
    </citation>
    <scope>NUCLEOTIDE SEQUENCE [MRNA] (ISOFORMS 1 AND 2)</scope>
    <scope>FUNCTION</scope>
    <scope>TISSUE SPECIFICITY</scope>
    <scope>VARIANT VAL-912</scope>
</reference>
<reference evidence="14" key="3">
    <citation type="journal article" date="1996" name="DNA Res.">
        <title>Prediction of the coding sequences of unidentified human genes. VI. The coding sequences of 80 new genes (KIAA0201-KIAA0280) deduced by analysis of cDNA clones from cell line KG-1 and brain.</title>
        <authorList>
            <person name="Nagase T."/>
            <person name="Seki N."/>
            <person name="Ishikawa K."/>
            <person name="Ohira M."/>
            <person name="Kawarabayasi Y."/>
            <person name="Ohara O."/>
            <person name="Tanaka A."/>
            <person name="Kotani H."/>
            <person name="Miyajima N."/>
            <person name="Nomura N."/>
        </authorList>
    </citation>
    <scope>NUCLEOTIDE SEQUENCE [LARGE SCALE MRNA] (ISOFORM 1)</scope>
    <scope>VARIANTS VAL-912 AND PRO-1833</scope>
    <source>
        <tissue evidence="15">Brain</tissue>
    </source>
</reference>
<reference key="4">
    <citation type="journal article" date="2002" name="DNA Res.">
        <title>Construction of expression-ready cDNA clones for KIAA genes: manual curation of 330 KIAA cDNA clones.</title>
        <authorList>
            <person name="Nakajima D."/>
            <person name="Okazaki N."/>
            <person name="Yamakawa H."/>
            <person name="Kikuno R."/>
            <person name="Ohara O."/>
            <person name="Nagase T."/>
        </authorList>
    </citation>
    <scope>SEQUENCE REVISION</scope>
</reference>
<reference key="5">
    <citation type="journal article" date="2006" name="Nature">
        <title>The DNA sequence, annotation and analysis of human chromosome 3.</title>
        <authorList>
            <person name="Muzny D.M."/>
            <person name="Scherer S.E."/>
            <person name="Kaul R."/>
            <person name="Wang J."/>
            <person name="Yu J."/>
            <person name="Sudbrak R."/>
            <person name="Buhay C.J."/>
            <person name="Chen R."/>
            <person name="Cree A."/>
            <person name="Ding Y."/>
            <person name="Dugan-Rocha S."/>
            <person name="Gill R."/>
            <person name="Gunaratne P."/>
            <person name="Harris R.A."/>
            <person name="Hawes A.C."/>
            <person name="Hernandez J."/>
            <person name="Hodgson A.V."/>
            <person name="Hume J."/>
            <person name="Jackson A."/>
            <person name="Khan Z.M."/>
            <person name="Kovar-Smith C."/>
            <person name="Lewis L.R."/>
            <person name="Lozado R.J."/>
            <person name="Metzker M.L."/>
            <person name="Milosavljevic A."/>
            <person name="Miner G.R."/>
            <person name="Morgan M.B."/>
            <person name="Nazareth L.V."/>
            <person name="Scott G."/>
            <person name="Sodergren E."/>
            <person name="Song X.-Z."/>
            <person name="Steffen D."/>
            <person name="Wei S."/>
            <person name="Wheeler D.A."/>
            <person name="Wright M.W."/>
            <person name="Worley K.C."/>
            <person name="Yuan Y."/>
            <person name="Zhang Z."/>
            <person name="Adams C.Q."/>
            <person name="Ansari-Lari M.A."/>
            <person name="Ayele M."/>
            <person name="Brown M.J."/>
            <person name="Chen G."/>
            <person name="Chen Z."/>
            <person name="Clendenning J."/>
            <person name="Clerc-Blankenburg K.P."/>
            <person name="Chen R."/>
            <person name="Chen Z."/>
            <person name="Davis C."/>
            <person name="Delgado O."/>
            <person name="Dinh H.H."/>
            <person name="Dong W."/>
            <person name="Draper H."/>
            <person name="Ernst S."/>
            <person name="Fu G."/>
            <person name="Gonzalez-Garay M.L."/>
            <person name="Garcia D.K."/>
            <person name="Gillett W."/>
            <person name="Gu J."/>
            <person name="Hao B."/>
            <person name="Haugen E."/>
            <person name="Havlak P."/>
            <person name="He X."/>
            <person name="Hennig S."/>
            <person name="Hu S."/>
            <person name="Huang W."/>
            <person name="Jackson L.R."/>
            <person name="Jacob L.S."/>
            <person name="Kelly S.H."/>
            <person name="Kube M."/>
            <person name="Levy R."/>
            <person name="Li Z."/>
            <person name="Liu B."/>
            <person name="Liu J."/>
            <person name="Liu W."/>
            <person name="Lu J."/>
            <person name="Maheshwari M."/>
            <person name="Nguyen B.-V."/>
            <person name="Okwuonu G.O."/>
            <person name="Palmeiri A."/>
            <person name="Pasternak S."/>
            <person name="Perez L.M."/>
            <person name="Phelps K.A."/>
            <person name="Plopper F.J."/>
            <person name="Qiang B."/>
            <person name="Raymond C."/>
            <person name="Rodriguez R."/>
            <person name="Saenphimmachak C."/>
            <person name="Santibanez J."/>
            <person name="Shen H."/>
            <person name="Shen Y."/>
            <person name="Subramanian S."/>
            <person name="Tabor P.E."/>
            <person name="Verduzco D."/>
            <person name="Waldron L."/>
            <person name="Wang J."/>
            <person name="Wang J."/>
            <person name="Wang Q."/>
            <person name="Williams G.A."/>
            <person name="Wong G.K.-S."/>
            <person name="Yao Z."/>
            <person name="Zhang J."/>
            <person name="Zhang X."/>
            <person name="Zhao G."/>
            <person name="Zhou J."/>
            <person name="Zhou Y."/>
            <person name="Nelson D."/>
            <person name="Lehrach H."/>
            <person name="Reinhardt R."/>
            <person name="Naylor S.L."/>
            <person name="Yang H."/>
            <person name="Olson M."/>
            <person name="Weinstock G."/>
            <person name="Gibbs R.A."/>
        </authorList>
    </citation>
    <scope>NUCLEOTIDE SEQUENCE [LARGE SCALE GENOMIC DNA]</scope>
</reference>
<reference key="6">
    <citation type="journal article" date="2004" name="Genome Res.">
        <title>The status, quality, and expansion of the NIH full-length cDNA project: the Mammalian Gene Collection (MGC).</title>
        <authorList>
            <consortium name="The MGC Project Team"/>
        </authorList>
    </citation>
    <scope>NUCLEOTIDE SEQUENCE [LARGE SCALE MRNA] (ISOFORM 1)</scope>
    <scope>VARIANTS VAL-912 AND PRO-1833</scope>
</reference>
<reference key="7">
    <citation type="journal article" date="2006" name="Blood">
        <title>Novel stabilin-1 interacting chitinase-like protein (SI-CLP) is up-regulated in alternatively activated macrophages and secreted via lysosomal pathway.</title>
        <authorList>
            <person name="Kzhyshkowska J."/>
            <person name="Mamidi S."/>
            <person name="Gratchev A."/>
            <person name="Kremmer E."/>
            <person name="Schmuttermaier C."/>
            <person name="Krusell L."/>
            <person name="Haus G."/>
            <person name="Utikal J."/>
            <person name="Schledzewski K."/>
            <person name="Scholtze J."/>
            <person name="Goerdt S."/>
        </authorList>
    </citation>
    <scope>FUNCTION</scope>
    <scope>INTERACTION WITH CHID1</scope>
</reference>
<reference key="8">
    <citation type="journal article" date="2009" name="J. Proteome Res.">
        <title>Glycoproteomics analysis of human liver tissue by combination of multiple enzyme digestion and hydrazide chemistry.</title>
        <authorList>
            <person name="Chen R."/>
            <person name="Jiang X."/>
            <person name="Sun D."/>
            <person name="Han G."/>
            <person name="Wang F."/>
            <person name="Ye M."/>
            <person name="Wang L."/>
            <person name="Zou H."/>
        </authorList>
    </citation>
    <scope>GLYCOSYLATION [LARGE SCALE ANALYSIS] AT ASN-1096; ASN-1626; ASN-1727; ASN-2347 AND ASN-2424</scope>
    <source>
        <tissue>Liver</tissue>
    </source>
</reference>
<reference key="9">
    <citation type="journal article" date="2014" name="J. Proteomics">
        <title>An enzyme assisted RP-RPLC approach for in-depth analysis of human liver phosphoproteome.</title>
        <authorList>
            <person name="Bian Y."/>
            <person name="Song C."/>
            <person name="Cheng K."/>
            <person name="Dong M."/>
            <person name="Wang F."/>
            <person name="Huang J."/>
            <person name="Sun D."/>
            <person name="Wang L."/>
            <person name="Ye M."/>
            <person name="Zou H."/>
        </authorList>
    </citation>
    <scope>IDENTIFICATION BY MASS SPECTROMETRY [LARGE SCALE ANALYSIS]</scope>
    <source>
        <tissue>Liver</tissue>
    </source>
</reference>
<reference key="10">
    <citation type="journal article" date="2023" name="Am. J. Hum. Genet.">
        <title>A form of inherited hyperferritinemia associated with bi-allelic pathogenic variants of STAB1.</title>
        <authorList>
            <person name="Monfrini E."/>
            <person name="Pelucchi S."/>
            <person name="Hollmen M."/>
            <person name="Viitala M."/>
            <person name="Mariani R."/>
            <person name="Bertola F."/>
            <person name="Majore S."/>
            <person name="Di Fonzo A."/>
            <person name="Piperno A."/>
        </authorList>
    </citation>
    <scope>INVOLVEMENT IN HRFT</scope>
    <scope>VARIANTS HRFT SER-120; LYS-348; 724-PHE--GLY-726 DEL; PRO-2244; CYS-2339 AND 2443-TRP--LYS-2570 DEL</scope>
</reference>
<proteinExistence type="evidence at protein level"/>